<keyword id="KW-0150">Chloroplast</keyword>
<keyword id="KW-0934">Plastid</keyword>
<keyword id="KW-0687">Ribonucleoprotein</keyword>
<keyword id="KW-0689">Ribosomal protein</keyword>
<keyword id="KW-0694">RNA-binding</keyword>
<keyword id="KW-0699">rRNA-binding</keyword>
<dbReference type="EMBL" id="Z29239">
    <property type="protein sequence ID" value="CAA82438.1"/>
    <property type="molecule type" value="Genomic_DNA"/>
</dbReference>
<dbReference type="PIR" id="S41267">
    <property type="entry name" value="S41267"/>
</dbReference>
<dbReference type="SMR" id="P69642"/>
<dbReference type="GO" id="GO:0009507">
    <property type="term" value="C:chloroplast"/>
    <property type="evidence" value="ECO:0007669"/>
    <property type="project" value="UniProtKB-SubCell"/>
</dbReference>
<dbReference type="GO" id="GO:0015935">
    <property type="term" value="C:small ribosomal subunit"/>
    <property type="evidence" value="ECO:0007669"/>
    <property type="project" value="InterPro"/>
</dbReference>
<dbReference type="GO" id="GO:0019843">
    <property type="term" value="F:rRNA binding"/>
    <property type="evidence" value="ECO:0007669"/>
    <property type="project" value="UniProtKB-KW"/>
</dbReference>
<dbReference type="GO" id="GO:0003735">
    <property type="term" value="F:structural constituent of ribosome"/>
    <property type="evidence" value="ECO:0007669"/>
    <property type="project" value="InterPro"/>
</dbReference>
<dbReference type="GO" id="GO:0042274">
    <property type="term" value="P:ribosomal small subunit biogenesis"/>
    <property type="evidence" value="ECO:0007669"/>
    <property type="project" value="TreeGrafter"/>
</dbReference>
<dbReference type="GO" id="GO:0006412">
    <property type="term" value="P:translation"/>
    <property type="evidence" value="ECO:0007669"/>
    <property type="project" value="InterPro"/>
</dbReference>
<dbReference type="CDD" id="cd00165">
    <property type="entry name" value="S4"/>
    <property type="match status" value="1"/>
</dbReference>
<dbReference type="FunFam" id="1.10.1050.10:FF:000002">
    <property type="entry name" value="30S ribosomal protein S4, chloroplastic"/>
    <property type="match status" value="1"/>
</dbReference>
<dbReference type="FunFam" id="3.10.290.10:FF:000081">
    <property type="entry name" value="30S ribosomal protein S4, chloroplastic"/>
    <property type="match status" value="1"/>
</dbReference>
<dbReference type="Gene3D" id="1.10.1050.10">
    <property type="entry name" value="Ribosomal Protein S4 Delta 41, Chain A, domain 1"/>
    <property type="match status" value="1"/>
</dbReference>
<dbReference type="Gene3D" id="3.10.290.10">
    <property type="entry name" value="RNA-binding S4 domain"/>
    <property type="match status" value="1"/>
</dbReference>
<dbReference type="HAMAP" id="MF_01306_B">
    <property type="entry name" value="Ribosomal_uS4_B"/>
    <property type="match status" value="1"/>
</dbReference>
<dbReference type="InterPro" id="IPR022801">
    <property type="entry name" value="Ribosomal_uS4"/>
</dbReference>
<dbReference type="InterPro" id="IPR005709">
    <property type="entry name" value="Ribosomal_uS4_bac-type"/>
</dbReference>
<dbReference type="InterPro" id="IPR018079">
    <property type="entry name" value="Ribosomal_uS4_CS"/>
</dbReference>
<dbReference type="InterPro" id="IPR001912">
    <property type="entry name" value="Ribosomal_uS4_N"/>
</dbReference>
<dbReference type="InterPro" id="IPR002942">
    <property type="entry name" value="S4_RNA-bd"/>
</dbReference>
<dbReference type="InterPro" id="IPR036986">
    <property type="entry name" value="S4_RNA-bd_sf"/>
</dbReference>
<dbReference type="NCBIfam" id="NF003717">
    <property type="entry name" value="PRK05327.1"/>
    <property type="match status" value="1"/>
</dbReference>
<dbReference type="NCBIfam" id="TIGR01017">
    <property type="entry name" value="rpsD_bact"/>
    <property type="match status" value="1"/>
</dbReference>
<dbReference type="PANTHER" id="PTHR11831">
    <property type="entry name" value="30S 40S RIBOSOMAL PROTEIN"/>
    <property type="match status" value="1"/>
</dbReference>
<dbReference type="PANTHER" id="PTHR11831:SF4">
    <property type="entry name" value="SMALL RIBOSOMAL SUBUNIT PROTEIN US4M"/>
    <property type="match status" value="1"/>
</dbReference>
<dbReference type="Pfam" id="PF00163">
    <property type="entry name" value="Ribosomal_S4"/>
    <property type="match status" value="1"/>
</dbReference>
<dbReference type="Pfam" id="PF01479">
    <property type="entry name" value="S4"/>
    <property type="match status" value="1"/>
</dbReference>
<dbReference type="SMART" id="SM01390">
    <property type="entry name" value="Ribosomal_S4"/>
    <property type="match status" value="1"/>
</dbReference>
<dbReference type="SMART" id="SM00363">
    <property type="entry name" value="S4"/>
    <property type="match status" value="1"/>
</dbReference>
<dbReference type="SUPFAM" id="SSF55174">
    <property type="entry name" value="Alpha-L RNA-binding motif"/>
    <property type="match status" value="1"/>
</dbReference>
<dbReference type="PROSITE" id="PS00632">
    <property type="entry name" value="RIBOSOMAL_S4"/>
    <property type="match status" value="1"/>
</dbReference>
<dbReference type="PROSITE" id="PS50889">
    <property type="entry name" value="S4"/>
    <property type="match status" value="1"/>
</dbReference>
<reference key="1">
    <citation type="journal article" date="1994" name="Plant Syst. Evol.">
        <title>The chloroplast gene rps4 as a tool for the study of Poaceae phylogeny.</title>
        <authorList>
            <person name="Nadot S."/>
            <person name="Bajon R."/>
            <person name="Lejeune B."/>
        </authorList>
        <dbReference type="AGRICOLA" id="IND20417698"/>
    </citation>
    <scope>NUCLEOTIDE SEQUENCE [GENOMIC DNA]</scope>
</reference>
<comment type="function">
    <text evidence="1">One of the primary rRNA binding proteins, it binds directly to 16S rRNA where it nucleates assembly of the body of the 30S subunit.</text>
</comment>
<comment type="function">
    <text evidence="1">With S5 and S12 plays an important role in translational accuracy.</text>
</comment>
<comment type="subunit">
    <text evidence="1">Part of the 30S ribosomal subunit. Contacts protein S5. The interaction surface between S4 and S5 is involved in control of translational fidelity (By similarity).</text>
</comment>
<comment type="subcellular location">
    <subcellularLocation>
        <location>Plastid</location>
        <location>Chloroplast</location>
    </subcellularLocation>
</comment>
<comment type="similarity">
    <text evidence="3">Belongs to the universal ribosomal protein uS4 family.</text>
</comment>
<sequence>MSRYRGPRLKKIRRLGALPGLTRKTPKSGSNLKKKFHSGKKEQYRIRLQEKQKLRFHYGLTERQLLRYVHIAGKAKRSTGQVLLQLLEMRLDNILFRLGMASTIPGARQLVNHRHILVNGRIVNIPSFRCKPRDIITTKDNQRSKGLVQTLMASSDPGKLPKHLTIDTLEYKGLVNKILDRKWVGLKINELLVVEY</sequence>
<feature type="chain" id="PRO_0000132585" description="Small ribosomal subunit protein uS4c">
    <location>
        <begin position="1"/>
        <end position="196" status="greater than"/>
    </location>
</feature>
<feature type="domain" description="S4 RNA-binding">
    <location>
        <begin position="89"/>
        <end position="169"/>
    </location>
</feature>
<feature type="region of interest" description="Disordered" evidence="2">
    <location>
        <begin position="17"/>
        <end position="36"/>
    </location>
</feature>
<feature type="non-terminal residue">
    <location>
        <position position="196"/>
    </location>
</feature>
<organism>
    <name type="scientific">Festuca gigantea</name>
    <name type="common">Giant fescue</name>
    <name type="synonym">Bromus giganteus</name>
    <dbReference type="NCBI Taxonomy" id="29677"/>
    <lineage>
        <taxon>Eukaryota</taxon>
        <taxon>Viridiplantae</taxon>
        <taxon>Streptophyta</taxon>
        <taxon>Embryophyta</taxon>
        <taxon>Tracheophyta</taxon>
        <taxon>Spermatophyta</taxon>
        <taxon>Magnoliopsida</taxon>
        <taxon>Liliopsida</taxon>
        <taxon>Poales</taxon>
        <taxon>Poaceae</taxon>
        <taxon>BOP clade</taxon>
        <taxon>Pooideae</taxon>
        <taxon>Poodae</taxon>
        <taxon>Poeae</taxon>
        <taxon>Poeae Chloroplast Group 2 (Poeae type)</taxon>
        <taxon>Loliodinae</taxon>
        <taxon>Loliinae</taxon>
        <taxon>Lolium</taxon>
    </lineage>
</organism>
<gene>
    <name type="primary">rps4</name>
</gene>
<proteinExistence type="inferred from homology"/>
<accession>P69642</accession>
<accession>P36458</accession>
<accession>P36463</accession>
<protein>
    <recommendedName>
        <fullName evidence="3">Small ribosomal subunit protein uS4c</fullName>
    </recommendedName>
    <alternativeName>
        <fullName>30S ribosomal protein S4, chloroplastic</fullName>
    </alternativeName>
</protein>
<name>RR4_FESGI</name>
<geneLocation type="chloroplast"/>
<evidence type="ECO:0000250" key="1"/>
<evidence type="ECO:0000256" key="2">
    <source>
        <dbReference type="SAM" id="MobiDB-lite"/>
    </source>
</evidence>
<evidence type="ECO:0000305" key="3"/>